<accession>P20314</accession>
<organism>
    <name type="scientific">Enterobacteria phage T3</name>
    <name type="common">Bacteriophage T3</name>
    <dbReference type="NCBI Taxonomy" id="10759"/>
    <lineage>
        <taxon>Viruses</taxon>
        <taxon>Duplodnaviria</taxon>
        <taxon>Heunggongvirae</taxon>
        <taxon>Uroviricota</taxon>
        <taxon>Caudoviricetes</taxon>
        <taxon>Autographiviridae</taxon>
        <taxon>Studiervirinae</taxon>
        <taxon>Teetrevirus</taxon>
        <taxon>Teetrevirus T3</taxon>
    </lineage>
</organism>
<gene>
    <name type="primary">3</name>
</gene>
<sequence length="152" mass="17432">MAGAYAARCTQGRAFRSGLEDKVSKQLESKGIKFDYELWRIPYVIPESDHLYTPDFLLPNGIFIETKGLWDSDDRKKHLLIREQHPELDIRLVFSSSRSKLYKGSPTSYGEWCEKHGILFADKLIPVAGVKEPKKEVPFDKFKTKKGVKKNG</sequence>
<keyword id="KW-0255">Endonuclease</keyword>
<keyword id="KW-0378">Hydrolase</keyword>
<keyword id="KW-0540">Nuclease</keyword>
<reference key="1">
    <citation type="journal article" date="1989" name="J. Mol. Biol.">
        <title>Sequence of bacteriophage T3 DNA from gene 2.5 through gene 9.</title>
        <authorList>
            <person name="Beck P.J."/>
            <person name="Gonzalez S."/>
            <person name="Ward C.L."/>
            <person name="Molineux I.J."/>
        </authorList>
    </citation>
    <scope>NUCLEOTIDE SEQUENCE [GENOMIC DNA]</scope>
    <source>
        <strain>Luria</strain>
    </source>
</reference>
<feature type="chain" id="PRO_0000106485" description="Endodeoxyribonuclease 1">
    <location>
        <begin position="1"/>
        <end position="152"/>
    </location>
</feature>
<organismHost>
    <name type="scientific">Escherichia coli</name>
    <dbReference type="NCBI Taxonomy" id="562"/>
</organismHost>
<protein>
    <recommendedName>
        <fullName>Endodeoxyribonuclease 1</fullName>
        <ecNumber>3.1.21.2</ecNumber>
    </recommendedName>
    <alternativeName>
        <fullName>Endodeoxyribonuclease I</fullName>
        <shortName>Endonuclease</shortName>
    </alternativeName>
</protein>
<proteinExistence type="predicted"/>
<dbReference type="EC" id="3.1.21.2"/>
<dbReference type="EMBL" id="X17255">
    <property type="protein sequence ID" value="CAA35132.1"/>
    <property type="molecule type" value="Genomic_DNA"/>
</dbReference>
<dbReference type="PIR" id="S07505">
    <property type="entry name" value="S07505"/>
</dbReference>
<dbReference type="RefSeq" id="NP_523312.1">
    <property type="nucleotide sequence ID" value="NC_003298.1"/>
</dbReference>
<dbReference type="SMR" id="P20314"/>
<dbReference type="KEGG" id="vg:927412"/>
<dbReference type="OrthoDB" id="17050at10239"/>
<dbReference type="GO" id="GO:0008833">
    <property type="term" value="F:deoxyribonuclease IV (phage-T4-induced) activity"/>
    <property type="evidence" value="ECO:0007669"/>
    <property type="project" value="UniProtKB-EC"/>
</dbReference>
<dbReference type="GO" id="GO:0015074">
    <property type="term" value="P:DNA integration"/>
    <property type="evidence" value="ECO:0007669"/>
    <property type="project" value="InterPro"/>
</dbReference>
<dbReference type="GO" id="GO:0016032">
    <property type="term" value="P:viral process"/>
    <property type="evidence" value="ECO:0007669"/>
    <property type="project" value="InterPro"/>
</dbReference>
<dbReference type="CDD" id="cd22324">
    <property type="entry name" value="Endonuclease_I"/>
    <property type="match status" value="1"/>
</dbReference>
<dbReference type="Gene3D" id="3.40.91.30">
    <property type="match status" value="1"/>
</dbReference>
<dbReference type="InterPro" id="IPR008029">
    <property type="entry name" value="Phage_T7_Gp3_endoDNaseI"/>
</dbReference>
<dbReference type="InterPro" id="IPR011335">
    <property type="entry name" value="Restrct_endonuc-II-like"/>
</dbReference>
<dbReference type="Pfam" id="PF05367">
    <property type="entry name" value="Phage_endo_I"/>
    <property type="match status" value="1"/>
</dbReference>
<dbReference type="SUPFAM" id="SSF52980">
    <property type="entry name" value="Restriction endonuclease-like"/>
    <property type="match status" value="1"/>
</dbReference>
<comment type="function">
    <text>Endodeoxyribonuclease I, which is expressed in the late stage, is necessary for T3 genetic recombination and the breakdown of host DNA. In the early stage of infection, T3 DNA replicates as a linear monomer. In the late stage, the T3 DNA replicates via linear concatemers several genomes in length. The gene 3 product has also been implicated in the maturation of these concatemers.</text>
</comment>
<comment type="catalytic activity">
    <reaction>
        <text>Endonucleolytic cleavage to 5'-phosphooligonucleotide end-products.</text>
        <dbReference type="EC" id="3.1.21.2"/>
    </reaction>
</comment>
<name>ENRN_BPT3</name>